<accession>A2RRV3</accession>
<name>PATL1_DANRE</name>
<gene>
    <name type="primary">patl1</name>
    <name type="ORF">zgc:158239</name>
</gene>
<comment type="function">
    <text evidence="2">RNA-binding protein involved in deadenylation-dependent decapping of mRNAs, leading to the degradation of mRNAs. Acts as a scaffold protein that connects deadenylation and decapping machinery. Required for cytoplasmic mRNA processing body (P-body) assembly.</text>
</comment>
<comment type="subunit">
    <text evidence="1">Interacts with ribonucleoprotein complex components.</text>
</comment>
<comment type="subcellular location">
    <subcellularLocation>
        <location evidence="2">Cytoplasm</location>
        <location evidence="2">P-body</location>
    </subcellularLocation>
    <subcellularLocation>
        <location evidence="2">Nucleus</location>
    </subcellularLocation>
    <subcellularLocation>
        <location evidence="2">Nucleus</location>
        <location evidence="2">PML body</location>
    </subcellularLocation>
    <subcellularLocation>
        <location evidence="2">Nucleus speckle</location>
    </subcellularLocation>
    <text evidence="2">Predominantly cytoplasmic. Shuttles between the nucleus and the cytoplasm in a CRM1-dependent manner. Enriched in splicing speckles. Localization to nuclear foci and speckles requires active transcription. Excluded from the nucleolus.</text>
</comment>
<comment type="similarity">
    <text evidence="5">Belongs to the PAT1 family.</text>
</comment>
<protein>
    <recommendedName>
        <fullName>Protein PAT1 homolog 1</fullName>
    </recommendedName>
    <alternativeName>
        <fullName>PAT1-like protein 1</fullName>
    </alternativeName>
    <alternativeName>
        <fullName>Protein PAT1 homolog b</fullName>
        <shortName>Pat1b</shortName>
    </alternativeName>
</protein>
<proteinExistence type="evidence at protein level"/>
<sequence length="765" mass="85940">MFRFQSLDDDCTLEEEEGLVEEEDEIDQFNDDTFGAGAIDDDWQEEHTRLAELDERVRDVLPGAGDSDTSHGGSNAHSSVLPPPSSSSRLYPDIDERGGGDLAESLTRLILGSDPAIAGVGSTSSDRSHLPPMLSAHPPHPSALAGPSSLLRSYQQHQQFLHRGPAPLSQINSHSIWENSMGFSPVSVNSGLIGQKEDKTLLSIIKEVGLPNRPPSLSRDEGRDLSERVPPPRSSSPVIGSPPVRAVPIGTPPKQPMSQILNQQNNHPSAIHVRASVPMRFPPPFPERLSPNNLLSIAKSPLSHSPFPAGVNPVLSQIQRAQLLNSQVGQFQRGPAPPLLQGGVGGFRPFFGQSGPRIGPHGPPLGHAPIRHNTTHLHPQHRRMLSQRMQNRGDHVGGRGVGERKNRDPYSNLMTQREKEWVAKIQMMQLQSTDPYLDDYYYQNYYEKMEKRQERDRDNRKEHTTKLITPQVAKLEHTYRPVQFAGSLGKLTVSSVNNPRKMIDAVVTSRSDDEEKREKQVWNKRRQILYTVEKMYSLLLEVQDFEKKFLQTPEHQRDVLLEQHKTHTLQLYNSLREKEWDDRVSDEQCLMIMSVRKGKRLISRLLPFLPQPQAAAVVMGIARNLPALAKKDKQDQVLCWLVEPVSVVIQSMSSTSLTDLLQELQGSEGQLPLVLQNKFGVTLLYLILSEGERMQSSDPNCQLMDDNRWTELVFSVTRELLKVPSSALSSPLFTPPNLVSLFSRYVDRQRLELLQEKLQITALSR</sequence>
<feature type="chain" id="PRO_0000320966" description="Protein PAT1 homolog 1">
    <location>
        <begin position="1"/>
        <end position="765"/>
    </location>
</feature>
<feature type="region of interest" description="Disordered" evidence="3">
    <location>
        <begin position="1"/>
        <end position="98"/>
    </location>
</feature>
<feature type="region of interest" description="Disordered" evidence="3">
    <location>
        <begin position="119"/>
        <end position="147"/>
    </location>
</feature>
<feature type="region of interest" description="Disordered" evidence="3">
    <location>
        <begin position="210"/>
        <end position="244"/>
    </location>
</feature>
<feature type="compositionally biased region" description="Acidic residues" evidence="3">
    <location>
        <begin position="7"/>
        <end position="30"/>
    </location>
</feature>
<feature type="compositionally biased region" description="Basic and acidic residues" evidence="3">
    <location>
        <begin position="45"/>
        <end position="59"/>
    </location>
</feature>
<feature type="compositionally biased region" description="Basic and acidic residues" evidence="3">
    <location>
        <begin position="218"/>
        <end position="227"/>
    </location>
</feature>
<feature type="compositionally biased region" description="Low complexity" evidence="3">
    <location>
        <begin position="235"/>
        <end position="244"/>
    </location>
</feature>
<feature type="modified residue" description="Phosphoserine" evidence="4">
    <location>
        <position position="235"/>
    </location>
</feature>
<feature type="modified residue" description="Phosphoserine" evidence="4">
    <location>
        <position position="236"/>
    </location>
</feature>
<organism>
    <name type="scientific">Danio rerio</name>
    <name type="common">Zebrafish</name>
    <name type="synonym">Brachydanio rerio</name>
    <dbReference type="NCBI Taxonomy" id="7955"/>
    <lineage>
        <taxon>Eukaryota</taxon>
        <taxon>Metazoa</taxon>
        <taxon>Chordata</taxon>
        <taxon>Craniata</taxon>
        <taxon>Vertebrata</taxon>
        <taxon>Euteleostomi</taxon>
        <taxon>Actinopterygii</taxon>
        <taxon>Neopterygii</taxon>
        <taxon>Teleostei</taxon>
        <taxon>Ostariophysi</taxon>
        <taxon>Cypriniformes</taxon>
        <taxon>Danionidae</taxon>
        <taxon>Danioninae</taxon>
        <taxon>Danio</taxon>
    </lineage>
</organism>
<dbReference type="EMBL" id="BC131868">
    <property type="protein sequence ID" value="AAI31869.1"/>
    <property type="molecule type" value="mRNA"/>
</dbReference>
<dbReference type="RefSeq" id="NP_001076497.1">
    <property type="nucleotide sequence ID" value="NM_001083028.1"/>
</dbReference>
<dbReference type="SMR" id="A2RRV3"/>
<dbReference type="FunCoup" id="A2RRV3">
    <property type="interactions" value="1779"/>
</dbReference>
<dbReference type="STRING" id="7955.ENSDARP00000091710"/>
<dbReference type="iPTMnet" id="A2RRV3"/>
<dbReference type="PaxDb" id="7955-ENSDARP00000091710"/>
<dbReference type="PeptideAtlas" id="A2RRV3"/>
<dbReference type="GeneID" id="100009659"/>
<dbReference type="KEGG" id="dre:100009659"/>
<dbReference type="AGR" id="ZFIN:ZDB-GENE-070209-83"/>
<dbReference type="CTD" id="219988"/>
<dbReference type="ZFIN" id="ZDB-GENE-070209-83">
    <property type="gene designation" value="patl1"/>
</dbReference>
<dbReference type="eggNOG" id="KOG4592">
    <property type="taxonomic scope" value="Eukaryota"/>
</dbReference>
<dbReference type="InParanoid" id="A2RRV3"/>
<dbReference type="OrthoDB" id="74835at2759"/>
<dbReference type="PhylomeDB" id="A2RRV3"/>
<dbReference type="Reactome" id="R-DRE-430039">
    <property type="pathway name" value="mRNA decay by 5' to 3' exoribonuclease"/>
</dbReference>
<dbReference type="PRO" id="PR:A2RRV3"/>
<dbReference type="Proteomes" id="UP000000437">
    <property type="component" value="Chromosome 1"/>
</dbReference>
<dbReference type="GO" id="GO:0016607">
    <property type="term" value="C:nuclear speck"/>
    <property type="evidence" value="ECO:0007669"/>
    <property type="project" value="UniProtKB-SubCell"/>
</dbReference>
<dbReference type="GO" id="GO:0000932">
    <property type="term" value="C:P-body"/>
    <property type="evidence" value="ECO:0000250"/>
    <property type="project" value="UniProtKB"/>
</dbReference>
<dbReference type="GO" id="GO:0016605">
    <property type="term" value="C:PML body"/>
    <property type="evidence" value="ECO:0007669"/>
    <property type="project" value="UniProtKB-SubCell"/>
</dbReference>
<dbReference type="GO" id="GO:0003723">
    <property type="term" value="F:RNA binding"/>
    <property type="evidence" value="ECO:0000250"/>
    <property type="project" value="UniProtKB"/>
</dbReference>
<dbReference type="GO" id="GO:0000290">
    <property type="term" value="P:deadenylation-dependent decapping of nuclear-transcribed mRNA"/>
    <property type="evidence" value="ECO:0000250"/>
    <property type="project" value="UniProtKB"/>
</dbReference>
<dbReference type="GO" id="GO:0033962">
    <property type="term" value="P:P-body assembly"/>
    <property type="evidence" value="ECO:0000250"/>
    <property type="project" value="UniProtKB"/>
</dbReference>
<dbReference type="InterPro" id="IPR039900">
    <property type="entry name" value="Pat1-like"/>
</dbReference>
<dbReference type="InterPro" id="IPR019167">
    <property type="entry name" value="PAT1_dom"/>
</dbReference>
<dbReference type="PANTHER" id="PTHR21551:SF2">
    <property type="entry name" value="PROTEIN PAT1 HOMOLOG 1"/>
    <property type="match status" value="1"/>
</dbReference>
<dbReference type="PANTHER" id="PTHR21551">
    <property type="entry name" value="TOPOISOMERASE II-ASSOCIATED PROTEIN PAT1"/>
    <property type="match status" value="1"/>
</dbReference>
<dbReference type="Pfam" id="PF09770">
    <property type="entry name" value="PAT1"/>
    <property type="match status" value="1"/>
</dbReference>
<reference key="1">
    <citation type="submission" date="2007-01" db="EMBL/GenBank/DDBJ databases">
        <authorList>
            <consortium name="NIH - Zebrafish Gene Collection (ZGC) project"/>
        </authorList>
    </citation>
    <scope>NUCLEOTIDE SEQUENCE [LARGE SCALE MRNA]</scope>
    <source>
        <tissue>Embryo</tissue>
    </source>
</reference>
<reference key="2">
    <citation type="journal article" date="2008" name="J. Proteome Res.">
        <title>Online automated in vivo zebrafish phosphoproteomics: from large-scale analysis down to a single embryo.</title>
        <authorList>
            <person name="Lemeer S."/>
            <person name="Pinkse M.W.H."/>
            <person name="Mohammed S."/>
            <person name="van Breukelen B."/>
            <person name="den Hertog J."/>
            <person name="Slijper M."/>
            <person name="Heck A.J.R."/>
        </authorList>
    </citation>
    <scope>PHOSPHORYLATION [LARGE SCALE ANALYSIS] AT SER-235 AND SER-236</scope>
    <scope>IDENTIFICATION BY MASS SPECTROMETRY</scope>
    <source>
        <tissue>Embryo</tissue>
    </source>
</reference>
<keyword id="KW-0963">Cytoplasm</keyword>
<keyword id="KW-0539">Nucleus</keyword>
<keyword id="KW-0597">Phosphoprotein</keyword>
<keyword id="KW-1185">Reference proteome</keyword>
<keyword id="KW-0694">RNA-binding</keyword>
<evidence type="ECO:0000250" key="1">
    <source>
        <dbReference type="UniProtKB" id="Q32N92"/>
    </source>
</evidence>
<evidence type="ECO:0000250" key="2">
    <source>
        <dbReference type="UniProtKB" id="Q86TB9"/>
    </source>
</evidence>
<evidence type="ECO:0000256" key="3">
    <source>
        <dbReference type="SAM" id="MobiDB-lite"/>
    </source>
</evidence>
<evidence type="ECO:0000269" key="4">
    <source>
    </source>
</evidence>
<evidence type="ECO:0000305" key="5"/>